<protein>
    <recommendedName>
        <fullName>Viral cathepsin</fullName>
        <shortName>V-cath</shortName>
        <ecNumber>3.4.22.50</ecNumber>
    </recommendedName>
    <alternativeName>
        <fullName>Cysteine proteinase</fullName>
        <shortName>CP</shortName>
    </alternativeName>
</protein>
<feature type="signal peptide" evidence="2">
    <location>
        <begin position="1"/>
        <end position="18"/>
    </location>
</feature>
<feature type="propeptide" id="PRO_0000322217" description="Activation peptide" evidence="2">
    <location>
        <begin position="19"/>
        <end position="126"/>
    </location>
</feature>
<feature type="chain" id="PRO_0000050587" description="Viral cathepsin">
    <location>
        <begin position="127"/>
        <end position="337"/>
    </location>
</feature>
<feature type="active site" evidence="1">
    <location>
        <position position="150"/>
    </location>
</feature>
<feature type="active site" evidence="1">
    <location>
        <position position="283"/>
    </location>
</feature>
<feature type="active site" evidence="1">
    <location>
        <position position="303"/>
    </location>
</feature>
<feature type="disulfide bond" evidence="1">
    <location>
        <begin position="147"/>
        <end position="188"/>
    </location>
</feature>
<feature type="disulfide bond" evidence="1">
    <location>
        <begin position="181"/>
        <end position="221"/>
    </location>
</feature>
<feature type="disulfide bond" evidence="1">
    <location>
        <begin position="276"/>
        <end position="324"/>
    </location>
</feature>
<dbReference type="EC" id="3.4.22.50"/>
<dbReference type="EMBL" id="AF325155">
    <property type="protein sequence ID" value="AAL01738.1"/>
    <property type="molecule type" value="Genomic_DNA"/>
</dbReference>
<dbReference type="RefSeq" id="NP_258322.1">
    <property type="nucleotide sequence ID" value="NC_003102.1"/>
</dbReference>
<dbReference type="SMR" id="Q91BH1"/>
<dbReference type="MEROPS" id="C01.083"/>
<dbReference type="KEGG" id="vg:922190"/>
<dbReference type="OrthoDB" id="4752at10239"/>
<dbReference type="Proteomes" id="UP000202667">
    <property type="component" value="Genome"/>
</dbReference>
<dbReference type="GO" id="GO:0008234">
    <property type="term" value="F:cysteine-type peptidase activity"/>
    <property type="evidence" value="ECO:0007669"/>
    <property type="project" value="UniProtKB-KW"/>
</dbReference>
<dbReference type="GO" id="GO:0006508">
    <property type="term" value="P:proteolysis"/>
    <property type="evidence" value="ECO:0007669"/>
    <property type="project" value="UniProtKB-KW"/>
</dbReference>
<dbReference type="CDD" id="cd02248">
    <property type="entry name" value="Peptidase_C1A"/>
    <property type="match status" value="1"/>
</dbReference>
<dbReference type="Gene3D" id="3.90.70.10">
    <property type="entry name" value="Cysteine proteinases"/>
    <property type="match status" value="1"/>
</dbReference>
<dbReference type="InterPro" id="IPR038765">
    <property type="entry name" value="Papain-like_cys_pep_sf"/>
</dbReference>
<dbReference type="InterPro" id="IPR000169">
    <property type="entry name" value="Pept_cys_AS"/>
</dbReference>
<dbReference type="InterPro" id="IPR025660">
    <property type="entry name" value="Pept_his_AS"/>
</dbReference>
<dbReference type="InterPro" id="IPR013128">
    <property type="entry name" value="Peptidase_C1A"/>
</dbReference>
<dbReference type="InterPro" id="IPR000668">
    <property type="entry name" value="Peptidase_C1A_C"/>
</dbReference>
<dbReference type="InterPro" id="IPR039417">
    <property type="entry name" value="Peptidase_C1A_papain-like"/>
</dbReference>
<dbReference type="InterPro" id="IPR013201">
    <property type="entry name" value="Prot_inhib_I29"/>
</dbReference>
<dbReference type="PANTHER" id="PTHR12411">
    <property type="entry name" value="CYSTEINE PROTEASE FAMILY C1-RELATED"/>
    <property type="match status" value="1"/>
</dbReference>
<dbReference type="Pfam" id="PF08246">
    <property type="entry name" value="Inhibitor_I29"/>
    <property type="match status" value="1"/>
</dbReference>
<dbReference type="Pfam" id="PF00112">
    <property type="entry name" value="Peptidase_C1"/>
    <property type="match status" value="1"/>
</dbReference>
<dbReference type="PRINTS" id="PR00705">
    <property type="entry name" value="PAPAIN"/>
</dbReference>
<dbReference type="SMART" id="SM00848">
    <property type="entry name" value="Inhibitor_I29"/>
    <property type="match status" value="1"/>
</dbReference>
<dbReference type="SMART" id="SM00645">
    <property type="entry name" value="Pept_C1"/>
    <property type="match status" value="1"/>
</dbReference>
<dbReference type="SUPFAM" id="SSF54001">
    <property type="entry name" value="Cysteine proteinases"/>
    <property type="match status" value="1"/>
</dbReference>
<dbReference type="PROSITE" id="PS00139">
    <property type="entry name" value="THIOL_PROTEASE_CYS"/>
    <property type="match status" value="1"/>
</dbReference>
<dbReference type="PROSITE" id="PS00639">
    <property type="entry name" value="THIOL_PROTEASE_HIS"/>
    <property type="match status" value="1"/>
</dbReference>
<accession>Q91BH1</accession>
<comment type="function">
    <text evidence="1">Cysteine protease that plays an essential role in host liquefaction to facilitate horizontal transmission of the virus. May participate in the degradation of foreign protein expressed by the baculovirus system (By similarity).</text>
</comment>
<comment type="catalytic activity">
    <reaction>
        <text>Endopeptidase of broad specificity, hydrolyzing substrates of both cathepsin L and cathepsin B.</text>
        <dbReference type="EC" id="3.4.22.50"/>
    </reaction>
</comment>
<comment type="PTM">
    <text evidence="1">Synthesized as an inactive proenzyme and activated by proteolytic removal of the inhibitory propeptide.</text>
</comment>
<comment type="similarity">
    <text evidence="3 4">Belongs to the peptidase C1 family.</text>
</comment>
<sequence length="337" mass="38098">MYLIYYYTIIAVATASIANEKIFYDIDSASVYYENFIKQHNKEYTTPDQRDAAFVNFKRNLADMNAMNNVSNQAVYGINKFSDIDKITFVNEHAGLVSNLINSTDSNFDPYRLCEYVTVAGPSARTPESFDWRKLNKVTKVKEQGVCGSCWAFAAIGNIESQYAIMHDSLIDLSEQQLLDCDRVDQGCDGGLMHLAFQEIIRIGGVEHEIDYPYQGIEYACRLAPSKLAVRLSHCYQYDLRDERKLLELLYKNGPIAVAIDCVDIIDYRSGIATVCNDNGLNHAVLLVGYGIENDTPYWIFKNSWGSNWGENGYFRARRNINACGMLNEFAASAVLL</sequence>
<proteinExistence type="inferred from homology"/>
<evidence type="ECO:0000250" key="1"/>
<evidence type="ECO:0000255" key="2"/>
<evidence type="ECO:0000255" key="3">
    <source>
        <dbReference type="PROSITE-ProRule" id="PRU10088"/>
    </source>
</evidence>
<evidence type="ECO:0000255" key="4">
    <source>
        <dbReference type="PROSITE-ProRule" id="PRU10089"/>
    </source>
</evidence>
<reference key="1">
    <citation type="journal article" date="2001" name="Virology">
        <title>Sequence analysis of the Spodoptera litura multicapsid nucleopolyhedrovirus genome.</title>
        <authorList>
            <person name="Pang Y."/>
            <person name="Yu J."/>
            <person name="Wang L."/>
            <person name="Hu X."/>
            <person name="Bao W."/>
            <person name="Li G."/>
            <person name="Chen C."/>
            <person name="Han H."/>
            <person name="Hu S."/>
            <person name="Yang H."/>
        </authorList>
    </citation>
    <scope>NUCLEOTIDE SEQUENCE [LARGE SCALE GENOMIC DNA]</scope>
    <source>
        <strain>G2</strain>
    </source>
</reference>
<organism>
    <name type="scientific">Spodoptera litura multicapsid nucleopolyhedrovirus</name>
    <name type="common">SpltMNPV</name>
    <dbReference type="NCBI Taxonomy" id="46242"/>
    <lineage>
        <taxon>Viruses</taxon>
        <taxon>Viruses incertae sedis</taxon>
        <taxon>Naldaviricetes</taxon>
        <taxon>Lefavirales</taxon>
        <taxon>Baculoviridae</taxon>
        <taxon>Alphabaculovirus</taxon>
        <taxon>Alphabaculovirus spliturae</taxon>
    </lineage>
</organism>
<organismHost>
    <name type="scientific">Lepidoptera</name>
    <name type="common">butterflies and moths</name>
    <dbReference type="NCBI Taxonomy" id="7088"/>
</organismHost>
<name>CATV_NPVST</name>
<gene>
    <name type="primary">VCATH</name>
    <name type="synonym">54</name>
</gene>
<keyword id="KW-1015">Disulfide bond</keyword>
<keyword id="KW-0378">Hydrolase</keyword>
<keyword id="KW-0645">Protease</keyword>
<keyword id="KW-0732">Signal</keyword>
<keyword id="KW-0788">Thiol protease</keyword>
<keyword id="KW-0865">Zymogen</keyword>